<organism>
    <name type="scientific">Sulfurihydrogenibium sp. (strain YO3AOP1)</name>
    <dbReference type="NCBI Taxonomy" id="436114"/>
    <lineage>
        <taxon>Bacteria</taxon>
        <taxon>Pseudomonadati</taxon>
        <taxon>Aquificota</taxon>
        <taxon>Aquificia</taxon>
        <taxon>Aquificales</taxon>
        <taxon>Hydrogenothermaceae</taxon>
        <taxon>Sulfurihydrogenibium</taxon>
    </lineage>
</organism>
<name>DNLJ_SULSY</name>
<gene>
    <name evidence="1" type="primary">ligA</name>
    <name type="ordered locus">SYO3AOP1_1433</name>
</gene>
<comment type="function">
    <text evidence="1">DNA ligase that catalyzes the formation of phosphodiester linkages between 5'-phosphoryl and 3'-hydroxyl groups in double-stranded DNA using NAD as a coenzyme and as the energy source for the reaction. It is essential for DNA replication and repair of damaged DNA.</text>
</comment>
<comment type="catalytic activity">
    <reaction evidence="1">
        <text>NAD(+) + (deoxyribonucleotide)n-3'-hydroxyl + 5'-phospho-(deoxyribonucleotide)m = (deoxyribonucleotide)n+m + AMP + beta-nicotinamide D-nucleotide.</text>
        <dbReference type="EC" id="6.5.1.2"/>
    </reaction>
</comment>
<comment type="cofactor">
    <cofactor evidence="1">
        <name>Mg(2+)</name>
        <dbReference type="ChEBI" id="CHEBI:18420"/>
    </cofactor>
    <cofactor evidence="1">
        <name>Mn(2+)</name>
        <dbReference type="ChEBI" id="CHEBI:29035"/>
    </cofactor>
</comment>
<comment type="similarity">
    <text evidence="1">Belongs to the NAD-dependent DNA ligase family. LigA subfamily.</text>
</comment>
<proteinExistence type="inferred from homology"/>
<accession>B2V5U1</accession>
<reference key="1">
    <citation type="journal article" date="2009" name="J. Bacteriol.">
        <title>Complete and draft genome sequences of six members of the Aquificales.</title>
        <authorList>
            <person name="Reysenbach A.-L."/>
            <person name="Hamamura N."/>
            <person name="Podar M."/>
            <person name="Griffiths E."/>
            <person name="Ferreira S."/>
            <person name="Hochstein R."/>
            <person name="Heidelberg J."/>
            <person name="Johnson J."/>
            <person name="Mead D."/>
            <person name="Pohorille A."/>
            <person name="Sarmiento M."/>
            <person name="Schweighofer K."/>
            <person name="Seshadri R."/>
            <person name="Voytek M.A."/>
        </authorList>
    </citation>
    <scope>NUCLEOTIDE SEQUENCE [LARGE SCALE GENOMIC DNA]</scope>
    <source>
        <strain>YO3AOP1</strain>
    </source>
</reference>
<feature type="chain" id="PRO_0000380490" description="DNA ligase">
    <location>
        <begin position="1"/>
        <end position="704"/>
    </location>
</feature>
<feature type="domain" description="BRCT" evidence="1">
    <location>
        <begin position="621"/>
        <end position="704"/>
    </location>
</feature>
<feature type="active site" description="N6-AMP-lysine intermediate" evidence="1">
    <location>
        <position position="140"/>
    </location>
</feature>
<feature type="binding site" evidence="1">
    <location>
        <begin position="58"/>
        <end position="62"/>
    </location>
    <ligand>
        <name>NAD(+)</name>
        <dbReference type="ChEBI" id="CHEBI:57540"/>
    </ligand>
</feature>
<feature type="binding site" evidence="1">
    <location>
        <begin position="107"/>
        <end position="108"/>
    </location>
    <ligand>
        <name>NAD(+)</name>
        <dbReference type="ChEBI" id="CHEBI:57540"/>
    </ligand>
</feature>
<feature type="binding site" evidence="1">
    <location>
        <position position="138"/>
    </location>
    <ligand>
        <name>NAD(+)</name>
        <dbReference type="ChEBI" id="CHEBI:57540"/>
    </ligand>
</feature>
<feature type="binding site" evidence="1">
    <location>
        <position position="161"/>
    </location>
    <ligand>
        <name>NAD(+)</name>
        <dbReference type="ChEBI" id="CHEBI:57540"/>
    </ligand>
</feature>
<feature type="binding site" evidence="1">
    <location>
        <position position="199"/>
    </location>
    <ligand>
        <name>NAD(+)</name>
        <dbReference type="ChEBI" id="CHEBI:57540"/>
    </ligand>
</feature>
<feature type="binding site" evidence="1">
    <location>
        <position position="323"/>
    </location>
    <ligand>
        <name>NAD(+)</name>
        <dbReference type="ChEBI" id="CHEBI:57540"/>
    </ligand>
</feature>
<feature type="binding site" evidence="1">
    <location>
        <position position="347"/>
    </location>
    <ligand>
        <name>NAD(+)</name>
        <dbReference type="ChEBI" id="CHEBI:57540"/>
    </ligand>
</feature>
<feature type="binding site" evidence="1">
    <location>
        <position position="441"/>
    </location>
    <ligand>
        <name>Zn(2+)</name>
        <dbReference type="ChEBI" id="CHEBI:29105"/>
    </ligand>
</feature>
<feature type="binding site" evidence="1">
    <location>
        <position position="444"/>
    </location>
    <ligand>
        <name>Zn(2+)</name>
        <dbReference type="ChEBI" id="CHEBI:29105"/>
    </ligand>
</feature>
<feature type="binding site" evidence="1">
    <location>
        <position position="459"/>
    </location>
    <ligand>
        <name>Zn(2+)</name>
        <dbReference type="ChEBI" id="CHEBI:29105"/>
    </ligand>
</feature>
<feature type="binding site" evidence="1">
    <location>
        <position position="464"/>
    </location>
    <ligand>
        <name>Zn(2+)</name>
        <dbReference type="ChEBI" id="CHEBI:29105"/>
    </ligand>
</feature>
<dbReference type="EC" id="6.5.1.2" evidence="1"/>
<dbReference type="EMBL" id="CP001080">
    <property type="protein sequence ID" value="ACD67035.1"/>
    <property type="molecule type" value="Genomic_DNA"/>
</dbReference>
<dbReference type="RefSeq" id="WP_012460092.1">
    <property type="nucleotide sequence ID" value="NC_010730.1"/>
</dbReference>
<dbReference type="SMR" id="B2V5U1"/>
<dbReference type="STRING" id="436114.SYO3AOP1_1433"/>
<dbReference type="KEGG" id="sul:SYO3AOP1_1433"/>
<dbReference type="eggNOG" id="COG0272">
    <property type="taxonomic scope" value="Bacteria"/>
</dbReference>
<dbReference type="HOGENOM" id="CLU_007764_2_1_0"/>
<dbReference type="GO" id="GO:0005829">
    <property type="term" value="C:cytosol"/>
    <property type="evidence" value="ECO:0007669"/>
    <property type="project" value="TreeGrafter"/>
</dbReference>
<dbReference type="GO" id="GO:0003677">
    <property type="term" value="F:DNA binding"/>
    <property type="evidence" value="ECO:0007669"/>
    <property type="project" value="InterPro"/>
</dbReference>
<dbReference type="GO" id="GO:0003911">
    <property type="term" value="F:DNA ligase (NAD+) activity"/>
    <property type="evidence" value="ECO:0007669"/>
    <property type="project" value="UniProtKB-UniRule"/>
</dbReference>
<dbReference type="GO" id="GO:0046872">
    <property type="term" value="F:metal ion binding"/>
    <property type="evidence" value="ECO:0007669"/>
    <property type="project" value="UniProtKB-KW"/>
</dbReference>
<dbReference type="GO" id="GO:0006281">
    <property type="term" value="P:DNA repair"/>
    <property type="evidence" value="ECO:0007669"/>
    <property type="project" value="UniProtKB-KW"/>
</dbReference>
<dbReference type="GO" id="GO:0006260">
    <property type="term" value="P:DNA replication"/>
    <property type="evidence" value="ECO:0007669"/>
    <property type="project" value="UniProtKB-KW"/>
</dbReference>
<dbReference type="CDD" id="cd17748">
    <property type="entry name" value="BRCT_DNA_ligase_like"/>
    <property type="match status" value="1"/>
</dbReference>
<dbReference type="CDD" id="cd00114">
    <property type="entry name" value="LIGANc"/>
    <property type="match status" value="1"/>
</dbReference>
<dbReference type="FunFam" id="1.10.150.20:FF:000006">
    <property type="entry name" value="DNA ligase"/>
    <property type="match status" value="1"/>
</dbReference>
<dbReference type="FunFam" id="1.10.150.20:FF:000007">
    <property type="entry name" value="DNA ligase"/>
    <property type="match status" value="1"/>
</dbReference>
<dbReference type="FunFam" id="2.40.50.140:FF:000012">
    <property type="entry name" value="DNA ligase"/>
    <property type="match status" value="1"/>
</dbReference>
<dbReference type="FunFam" id="3.30.470.30:FF:000001">
    <property type="entry name" value="DNA ligase"/>
    <property type="match status" value="1"/>
</dbReference>
<dbReference type="Gene3D" id="6.20.10.30">
    <property type="match status" value="1"/>
</dbReference>
<dbReference type="Gene3D" id="1.10.150.20">
    <property type="entry name" value="5' to 3' exonuclease, C-terminal subdomain"/>
    <property type="match status" value="2"/>
</dbReference>
<dbReference type="Gene3D" id="3.40.50.10190">
    <property type="entry name" value="BRCT domain"/>
    <property type="match status" value="1"/>
</dbReference>
<dbReference type="Gene3D" id="3.30.470.30">
    <property type="entry name" value="DNA ligase/mRNA capping enzyme"/>
    <property type="match status" value="1"/>
</dbReference>
<dbReference type="Gene3D" id="1.10.287.610">
    <property type="entry name" value="Helix hairpin bin"/>
    <property type="match status" value="1"/>
</dbReference>
<dbReference type="Gene3D" id="2.40.50.140">
    <property type="entry name" value="Nucleic acid-binding proteins"/>
    <property type="match status" value="1"/>
</dbReference>
<dbReference type="HAMAP" id="MF_01588">
    <property type="entry name" value="DNA_ligase_A"/>
    <property type="match status" value="1"/>
</dbReference>
<dbReference type="InterPro" id="IPR001357">
    <property type="entry name" value="BRCT_dom"/>
</dbReference>
<dbReference type="InterPro" id="IPR036420">
    <property type="entry name" value="BRCT_dom_sf"/>
</dbReference>
<dbReference type="InterPro" id="IPR041663">
    <property type="entry name" value="DisA/LigA_HHH"/>
</dbReference>
<dbReference type="InterPro" id="IPR001679">
    <property type="entry name" value="DNA_ligase"/>
</dbReference>
<dbReference type="InterPro" id="IPR018239">
    <property type="entry name" value="DNA_ligase_AS"/>
</dbReference>
<dbReference type="InterPro" id="IPR033136">
    <property type="entry name" value="DNA_ligase_CS"/>
</dbReference>
<dbReference type="InterPro" id="IPR013839">
    <property type="entry name" value="DNAligase_adenylation"/>
</dbReference>
<dbReference type="InterPro" id="IPR013840">
    <property type="entry name" value="DNAligase_N"/>
</dbReference>
<dbReference type="InterPro" id="IPR003583">
    <property type="entry name" value="Hlx-hairpin-Hlx_DNA-bd_motif"/>
</dbReference>
<dbReference type="InterPro" id="IPR012340">
    <property type="entry name" value="NA-bd_OB-fold"/>
</dbReference>
<dbReference type="InterPro" id="IPR004150">
    <property type="entry name" value="NAD_DNA_ligase_OB"/>
</dbReference>
<dbReference type="InterPro" id="IPR010994">
    <property type="entry name" value="RuvA_2-like"/>
</dbReference>
<dbReference type="InterPro" id="IPR004149">
    <property type="entry name" value="Znf_DNAligase_C4"/>
</dbReference>
<dbReference type="NCBIfam" id="TIGR00575">
    <property type="entry name" value="dnlj"/>
    <property type="match status" value="1"/>
</dbReference>
<dbReference type="NCBIfam" id="NF005932">
    <property type="entry name" value="PRK07956.1"/>
    <property type="match status" value="1"/>
</dbReference>
<dbReference type="PANTHER" id="PTHR23389">
    <property type="entry name" value="CHROMOSOME TRANSMISSION FIDELITY FACTOR 18"/>
    <property type="match status" value="1"/>
</dbReference>
<dbReference type="PANTHER" id="PTHR23389:SF9">
    <property type="entry name" value="DNA LIGASE"/>
    <property type="match status" value="1"/>
</dbReference>
<dbReference type="Pfam" id="PF00533">
    <property type="entry name" value="BRCT"/>
    <property type="match status" value="1"/>
</dbReference>
<dbReference type="Pfam" id="PF01653">
    <property type="entry name" value="DNA_ligase_aden"/>
    <property type="match status" value="1"/>
</dbReference>
<dbReference type="Pfam" id="PF03120">
    <property type="entry name" value="DNA_ligase_OB"/>
    <property type="match status" value="1"/>
</dbReference>
<dbReference type="Pfam" id="PF03119">
    <property type="entry name" value="DNA_ligase_ZBD"/>
    <property type="match status" value="1"/>
</dbReference>
<dbReference type="Pfam" id="PF12826">
    <property type="entry name" value="HHH_2"/>
    <property type="match status" value="1"/>
</dbReference>
<dbReference type="Pfam" id="PF14520">
    <property type="entry name" value="HHH_5"/>
    <property type="match status" value="1"/>
</dbReference>
<dbReference type="Pfam" id="PF22745">
    <property type="entry name" value="Nlig-Ia"/>
    <property type="match status" value="1"/>
</dbReference>
<dbReference type="PIRSF" id="PIRSF001604">
    <property type="entry name" value="LigA"/>
    <property type="match status" value="1"/>
</dbReference>
<dbReference type="SMART" id="SM00292">
    <property type="entry name" value="BRCT"/>
    <property type="match status" value="1"/>
</dbReference>
<dbReference type="SMART" id="SM00278">
    <property type="entry name" value="HhH1"/>
    <property type="match status" value="3"/>
</dbReference>
<dbReference type="SMART" id="SM00532">
    <property type="entry name" value="LIGANc"/>
    <property type="match status" value="1"/>
</dbReference>
<dbReference type="SUPFAM" id="SSF52113">
    <property type="entry name" value="BRCT domain"/>
    <property type="match status" value="1"/>
</dbReference>
<dbReference type="SUPFAM" id="SSF56091">
    <property type="entry name" value="DNA ligase/mRNA capping enzyme, catalytic domain"/>
    <property type="match status" value="1"/>
</dbReference>
<dbReference type="SUPFAM" id="SSF50249">
    <property type="entry name" value="Nucleic acid-binding proteins"/>
    <property type="match status" value="1"/>
</dbReference>
<dbReference type="SUPFAM" id="SSF47781">
    <property type="entry name" value="RuvA domain 2-like"/>
    <property type="match status" value="1"/>
</dbReference>
<dbReference type="PROSITE" id="PS50172">
    <property type="entry name" value="BRCT"/>
    <property type="match status" value="1"/>
</dbReference>
<dbReference type="PROSITE" id="PS01055">
    <property type="entry name" value="DNA_LIGASE_N1"/>
    <property type="match status" value="1"/>
</dbReference>
<dbReference type="PROSITE" id="PS01056">
    <property type="entry name" value="DNA_LIGASE_N2"/>
    <property type="match status" value="1"/>
</dbReference>
<evidence type="ECO:0000255" key="1">
    <source>
        <dbReference type="HAMAP-Rule" id="MF_01588"/>
    </source>
</evidence>
<keyword id="KW-0227">DNA damage</keyword>
<keyword id="KW-0234">DNA repair</keyword>
<keyword id="KW-0235">DNA replication</keyword>
<keyword id="KW-0436">Ligase</keyword>
<keyword id="KW-0460">Magnesium</keyword>
<keyword id="KW-0464">Manganese</keyword>
<keyword id="KW-0479">Metal-binding</keyword>
<keyword id="KW-0520">NAD</keyword>
<keyword id="KW-0862">Zinc</keyword>
<sequence>MYTDERQKELIKLTYEFLKLDAKKLTKEEAKKIVEDLREVIRFHDWRYYVLAQPVISDYEYDKLFKLLKDIEGKYPELITPDSPTQRVPSEITKVFPQVKHLTPMLSLDNSYNEADLRDFDRRVRELTGLDKVEYSVEPKFDGAGISLIYEKDLFVRGATRGDGEVGEEITNNLKVIKTIPLSAKFSQYGIDKVEIRGEVLIRKDLFKKMNEERLEEGLPLFANPRNAAAGSIRLQDPSEVAKRNLEAFVYQITYAEKDGKNLLGTVLKKHSDNIKMLHELGFKTPYPVMKVCIGIEEVIQYCEEWQRKRDAYPYEIDGMVIKVNDISLYDKLGFTSHHPRWAIAFKFKARQATTKIINVVFQVGRTGAITPVAKLEPVEIGGVIVSSVSLINEDFIREKDIRIGDTVLVERAGDVIPYVVMVIKEARTGNEKPIEFPKTCPSCGSPIVKPPGEAVYRCVNINCPAQVIERLIHFASKDAMDIKGLSEATIRKFYNLKLVRTIPDIYRLDYNLIKNIPGFGPKSVENLKNAIEESKKRPLYRLIYGLGIRYVGEVTAKTLASAVRCIDDLKNFTITDLMKLPDIGYKVASEIYNFFHNQENLKMIEELRELRVKTCHEEEEKKGKLAGLNFVFTGTLKCCSREKAKEIVESLGGNVLDTVSKKVHYLVVGEEPGSKLQKAQKLGTVKIINEEEFLKLIGGENTE</sequence>
<protein>
    <recommendedName>
        <fullName evidence="1">DNA ligase</fullName>
        <ecNumber evidence="1">6.5.1.2</ecNumber>
    </recommendedName>
    <alternativeName>
        <fullName evidence="1">Polydeoxyribonucleotide synthase [NAD(+)]</fullName>
    </alternativeName>
</protein>